<gene>
    <name type="primary">eIF1A</name>
    <name type="ordered locus">DKAM_1086</name>
</gene>
<proteinExistence type="inferred from homology"/>
<reference key="1">
    <citation type="journal article" date="2009" name="J. Bacteriol.">
        <title>Complete genome sequence of the anaerobic, protein-degrading hyperthermophilic crenarchaeon Desulfurococcus kamchatkensis.</title>
        <authorList>
            <person name="Ravin N.V."/>
            <person name="Mardanov A.V."/>
            <person name="Beletsky A.V."/>
            <person name="Kublanov I.V."/>
            <person name="Kolganova T.V."/>
            <person name="Lebedinsky A.V."/>
            <person name="Chernyh N.A."/>
            <person name="Bonch-Osmolovskaya E.A."/>
            <person name="Skryabin K.G."/>
        </authorList>
    </citation>
    <scope>NUCLEOTIDE SEQUENCE [LARGE SCALE GENOMIC DNA]</scope>
    <source>
        <strain>DSM 18924 / JCM 16383 / VKM B-2413 / 1221n</strain>
    </source>
</reference>
<keyword id="KW-0396">Initiation factor</keyword>
<keyword id="KW-0648">Protein biosynthesis</keyword>
<evidence type="ECO:0000255" key="1">
    <source>
        <dbReference type="HAMAP-Rule" id="MF_00216"/>
    </source>
</evidence>
<evidence type="ECO:0000256" key="2">
    <source>
        <dbReference type="SAM" id="MobiDB-lite"/>
    </source>
</evidence>
<dbReference type="EMBL" id="CP001140">
    <property type="protein sequence ID" value="ACL11412.1"/>
    <property type="molecule type" value="Genomic_DNA"/>
</dbReference>
<dbReference type="RefSeq" id="WP_012608753.1">
    <property type="nucleotide sequence ID" value="NC_011766.1"/>
</dbReference>
<dbReference type="SMR" id="B8D5N1"/>
<dbReference type="STRING" id="490899.DKAM_1086"/>
<dbReference type="GeneID" id="7171187"/>
<dbReference type="KEGG" id="dka:DKAM_1086"/>
<dbReference type="eggNOG" id="arCOG01179">
    <property type="taxonomic scope" value="Archaea"/>
</dbReference>
<dbReference type="HOGENOM" id="CLU_109098_1_2_2"/>
<dbReference type="Proteomes" id="UP000006903">
    <property type="component" value="Chromosome"/>
</dbReference>
<dbReference type="GO" id="GO:0003723">
    <property type="term" value="F:RNA binding"/>
    <property type="evidence" value="ECO:0007669"/>
    <property type="project" value="InterPro"/>
</dbReference>
<dbReference type="GO" id="GO:0003743">
    <property type="term" value="F:translation initiation factor activity"/>
    <property type="evidence" value="ECO:0007669"/>
    <property type="project" value="UniProtKB-UniRule"/>
</dbReference>
<dbReference type="CDD" id="cd05793">
    <property type="entry name" value="S1_IF1A"/>
    <property type="match status" value="1"/>
</dbReference>
<dbReference type="Gene3D" id="2.40.50.140">
    <property type="entry name" value="Nucleic acid-binding proteins"/>
    <property type="match status" value="1"/>
</dbReference>
<dbReference type="HAMAP" id="MF_00216">
    <property type="entry name" value="aIF_1A"/>
    <property type="match status" value="1"/>
</dbReference>
<dbReference type="InterPro" id="IPR012340">
    <property type="entry name" value="NA-bd_OB-fold"/>
</dbReference>
<dbReference type="InterPro" id="IPR006196">
    <property type="entry name" value="RNA-binding_domain_S1_IF1"/>
</dbReference>
<dbReference type="InterPro" id="IPR001253">
    <property type="entry name" value="TIF_eIF-1A"/>
</dbReference>
<dbReference type="NCBIfam" id="NF003082">
    <property type="entry name" value="PRK04012.1-1"/>
    <property type="match status" value="1"/>
</dbReference>
<dbReference type="NCBIfam" id="NF003084">
    <property type="entry name" value="PRK04012.1-3"/>
    <property type="match status" value="1"/>
</dbReference>
<dbReference type="PANTHER" id="PTHR21668">
    <property type="entry name" value="EIF-1A"/>
    <property type="match status" value="1"/>
</dbReference>
<dbReference type="Pfam" id="PF01176">
    <property type="entry name" value="eIF-1a"/>
    <property type="match status" value="1"/>
</dbReference>
<dbReference type="SMART" id="SM00652">
    <property type="entry name" value="eIF1a"/>
    <property type="match status" value="1"/>
</dbReference>
<dbReference type="SUPFAM" id="SSF50249">
    <property type="entry name" value="Nucleic acid-binding proteins"/>
    <property type="match status" value="1"/>
</dbReference>
<dbReference type="PROSITE" id="PS50832">
    <property type="entry name" value="S1_IF1_TYPE"/>
    <property type="match status" value="1"/>
</dbReference>
<sequence length="116" mass="12997">MRCLSKKHQKQGDEHGGEIPLPNPDEGTIICGVVRHLGGDYLIAKCLDGVDRKIRIPGKLRRKVWITEGDIILVGLWDFSSEKGEVVYKYGKNEVNKLVEKGVVPKEFIDALSELI</sequence>
<comment type="function">
    <text evidence="1">Seems to be required for maximal rate of protein biosynthesis. Enhances ribosome dissociation into subunits and stabilizes the binding of the initiator Met-tRNA(I) to 40 S ribosomal subunits.</text>
</comment>
<comment type="similarity">
    <text evidence="1">Belongs to the eIF-1A family.</text>
</comment>
<feature type="chain" id="PRO_1000124814" description="Translation initiation factor 1A">
    <location>
        <begin position="1"/>
        <end position="116"/>
    </location>
</feature>
<feature type="domain" description="S1-like" evidence="1">
    <location>
        <begin position="17"/>
        <end position="91"/>
    </location>
</feature>
<feature type="region of interest" description="Disordered" evidence="2">
    <location>
        <begin position="1"/>
        <end position="25"/>
    </location>
</feature>
<name>IF1A_DESA1</name>
<protein>
    <recommendedName>
        <fullName evidence="1">Translation initiation factor 1A</fullName>
        <shortName evidence="1">aIF-1A</shortName>
    </recommendedName>
</protein>
<organism>
    <name type="scientific">Desulfurococcus amylolyticus (strain DSM 18924 / JCM 16383 / VKM B-2413 / 1221n)</name>
    <name type="common">Desulfurococcus kamchatkensis</name>
    <dbReference type="NCBI Taxonomy" id="490899"/>
    <lineage>
        <taxon>Archaea</taxon>
        <taxon>Thermoproteota</taxon>
        <taxon>Thermoprotei</taxon>
        <taxon>Desulfurococcales</taxon>
        <taxon>Desulfurococcaceae</taxon>
        <taxon>Desulfurococcus</taxon>
    </lineage>
</organism>
<accession>B8D5N1</accession>